<reference key="1">
    <citation type="submission" date="2006-03" db="EMBL/GenBank/DDBJ databases">
        <title>Complete genome sequence of Francisella tularensis LVS (Live Vaccine Strain).</title>
        <authorList>
            <person name="Chain P."/>
            <person name="Larimer F."/>
            <person name="Land M."/>
            <person name="Stilwagen S."/>
            <person name="Larsson P."/>
            <person name="Bearden S."/>
            <person name="Chu M."/>
            <person name="Oyston P."/>
            <person name="Forsman M."/>
            <person name="Andersson S."/>
            <person name="Lindler L."/>
            <person name="Titball R."/>
            <person name="Garcia E."/>
        </authorList>
    </citation>
    <scope>NUCLEOTIDE SEQUENCE [LARGE SCALE GENOMIC DNA]</scope>
    <source>
        <strain>LVS</strain>
    </source>
</reference>
<keyword id="KW-0963">Cytoplasm</keyword>
<keyword id="KW-0227">DNA damage</keyword>
<keyword id="KW-0233">DNA recombination</keyword>
<keyword id="KW-0234">DNA repair</keyword>
<keyword id="KW-0238">DNA-binding</keyword>
<keyword id="KW-0255">Endonuclease</keyword>
<keyword id="KW-0378">Hydrolase</keyword>
<keyword id="KW-0460">Magnesium</keyword>
<keyword id="KW-0479">Metal-binding</keyword>
<keyword id="KW-0540">Nuclease</keyword>
<keyword id="KW-1185">Reference proteome</keyword>
<name>RUVC_FRATH</name>
<dbReference type="EC" id="3.1.21.10" evidence="1"/>
<dbReference type="EMBL" id="AM233362">
    <property type="protein sequence ID" value="CAJ79369.1"/>
    <property type="molecule type" value="Genomic_DNA"/>
</dbReference>
<dbReference type="RefSeq" id="WP_003015702.1">
    <property type="nucleotide sequence ID" value="NZ_CP009694.1"/>
</dbReference>
<dbReference type="SMR" id="Q2A3Q9"/>
<dbReference type="KEGG" id="ftl:FTL_0930"/>
<dbReference type="Proteomes" id="UP000001944">
    <property type="component" value="Chromosome"/>
</dbReference>
<dbReference type="GO" id="GO:0005737">
    <property type="term" value="C:cytoplasm"/>
    <property type="evidence" value="ECO:0007669"/>
    <property type="project" value="UniProtKB-SubCell"/>
</dbReference>
<dbReference type="GO" id="GO:0048476">
    <property type="term" value="C:Holliday junction resolvase complex"/>
    <property type="evidence" value="ECO:0007669"/>
    <property type="project" value="UniProtKB-UniRule"/>
</dbReference>
<dbReference type="GO" id="GO:0008821">
    <property type="term" value="F:crossover junction DNA endonuclease activity"/>
    <property type="evidence" value="ECO:0007669"/>
    <property type="project" value="UniProtKB-UniRule"/>
</dbReference>
<dbReference type="GO" id="GO:0003677">
    <property type="term" value="F:DNA binding"/>
    <property type="evidence" value="ECO:0007669"/>
    <property type="project" value="UniProtKB-KW"/>
</dbReference>
<dbReference type="GO" id="GO:0000287">
    <property type="term" value="F:magnesium ion binding"/>
    <property type="evidence" value="ECO:0007669"/>
    <property type="project" value="UniProtKB-UniRule"/>
</dbReference>
<dbReference type="GO" id="GO:0006310">
    <property type="term" value="P:DNA recombination"/>
    <property type="evidence" value="ECO:0007669"/>
    <property type="project" value="UniProtKB-UniRule"/>
</dbReference>
<dbReference type="GO" id="GO:0006281">
    <property type="term" value="P:DNA repair"/>
    <property type="evidence" value="ECO:0007669"/>
    <property type="project" value="UniProtKB-UniRule"/>
</dbReference>
<dbReference type="CDD" id="cd16962">
    <property type="entry name" value="RuvC"/>
    <property type="match status" value="1"/>
</dbReference>
<dbReference type="FunFam" id="3.30.420.10:FF:000002">
    <property type="entry name" value="Crossover junction endodeoxyribonuclease RuvC"/>
    <property type="match status" value="1"/>
</dbReference>
<dbReference type="Gene3D" id="3.30.420.10">
    <property type="entry name" value="Ribonuclease H-like superfamily/Ribonuclease H"/>
    <property type="match status" value="1"/>
</dbReference>
<dbReference type="HAMAP" id="MF_00034">
    <property type="entry name" value="RuvC"/>
    <property type="match status" value="1"/>
</dbReference>
<dbReference type="InterPro" id="IPR012337">
    <property type="entry name" value="RNaseH-like_sf"/>
</dbReference>
<dbReference type="InterPro" id="IPR036397">
    <property type="entry name" value="RNaseH_sf"/>
</dbReference>
<dbReference type="InterPro" id="IPR020563">
    <property type="entry name" value="X-over_junc_endoDNase_Mg_BS"/>
</dbReference>
<dbReference type="InterPro" id="IPR002176">
    <property type="entry name" value="X-over_junc_endoDNase_RuvC"/>
</dbReference>
<dbReference type="NCBIfam" id="NF000711">
    <property type="entry name" value="PRK00039.2-1"/>
    <property type="match status" value="1"/>
</dbReference>
<dbReference type="NCBIfam" id="TIGR00228">
    <property type="entry name" value="ruvC"/>
    <property type="match status" value="1"/>
</dbReference>
<dbReference type="PANTHER" id="PTHR30194">
    <property type="entry name" value="CROSSOVER JUNCTION ENDODEOXYRIBONUCLEASE RUVC"/>
    <property type="match status" value="1"/>
</dbReference>
<dbReference type="PANTHER" id="PTHR30194:SF3">
    <property type="entry name" value="CROSSOVER JUNCTION ENDODEOXYRIBONUCLEASE RUVC"/>
    <property type="match status" value="1"/>
</dbReference>
<dbReference type="Pfam" id="PF02075">
    <property type="entry name" value="RuvC"/>
    <property type="match status" value="1"/>
</dbReference>
<dbReference type="PRINTS" id="PR00696">
    <property type="entry name" value="RSOLVASERUVC"/>
</dbReference>
<dbReference type="SUPFAM" id="SSF53098">
    <property type="entry name" value="Ribonuclease H-like"/>
    <property type="match status" value="1"/>
</dbReference>
<dbReference type="PROSITE" id="PS01321">
    <property type="entry name" value="RUVC"/>
    <property type="match status" value="1"/>
</dbReference>
<accession>Q2A3Q9</accession>
<organism>
    <name type="scientific">Francisella tularensis subsp. holarctica (strain LVS)</name>
    <dbReference type="NCBI Taxonomy" id="376619"/>
    <lineage>
        <taxon>Bacteria</taxon>
        <taxon>Pseudomonadati</taxon>
        <taxon>Pseudomonadota</taxon>
        <taxon>Gammaproteobacteria</taxon>
        <taxon>Thiotrichales</taxon>
        <taxon>Francisellaceae</taxon>
        <taxon>Francisella</taxon>
    </lineage>
</organism>
<feature type="chain" id="PRO_1000002756" description="Crossover junction endodeoxyribonuclease RuvC">
    <location>
        <begin position="1"/>
        <end position="171"/>
    </location>
</feature>
<feature type="active site" evidence="1">
    <location>
        <position position="7"/>
    </location>
</feature>
<feature type="active site" evidence="1">
    <location>
        <position position="66"/>
    </location>
</feature>
<feature type="active site" evidence="1">
    <location>
        <position position="138"/>
    </location>
</feature>
<feature type="binding site" evidence="1">
    <location>
        <position position="7"/>
    </location>
    <ligand>
        <name>Mg(2+)</name>
        <dbReference type="ChEBI" id="CHEBI:18420"/>
        <label>1</label>
    </ligand>
</feature>
<feature type="binding site" evidence="1">
    <location>
        <position position="66"/>
    </location>
    <ligand>
        <name>Mg(2+)</name>
        <dbReference type="ChEBI" id="CHEBI:18420"/>
        <label>2</label>
    </ligand>
</feature>
<feature type="binding site" evidence="1">
    <location>
        <position position="138"/>
    </location>
    <ligand>
        <name>Mg(2+)</name>
        <dbReference type="ChEBI" id="CHEBI:18420"/>
        <label>1</label>
    </ligand>
</feature>
<protein>
    <recommendedName>
        <fullName evidence="1">Crossover junction endodeoxyribonuclease RuvC</fullName>
        <ecNumber evidence="1">3.1.21.10</ecNumber>
    </recommendedName>
    <alternativeName>
        <fullName evidence="1">Holliday junction nuclease RuvC</fullName>
    </alternativeName>
    <alternativeName>
        <fullName evidence="1">Holliday junction resolvase RuvC</fullName>
    </alternativeName>
</protein>
<sequence>MVILGIDPGSRITGFGVIKVQDNKIYYVASGCIQITEITTPKRLKQIADGITQIINIYAPTEAAIEQIFMFQNPMGAIKLGQARGVAMCTLAINNLEVSEYSAKQIKQAVVGTGGAAKSQVQHMVQSLLGLSKKPPEDAADALAIAICHYHSSKSLAKISGASRVSQKRIK</sequence>
<evidence type="ECO:0000255" key="1">
    <source>
        <dbReference type="HAMAP-Rule" id="MF_00034"/>
    </source>
</evidence>
<comment type="function">
    <text evidence="1">The RuvA-RuvB-RuvC complex processes Holliday junction (HJ) DNA during genetic recombination and DNA repair. Endonuclease that resolves HJ intermediates. Cleaves cruciform DNA by making single-stranded nicks across the HJ at symmetrical positions within the homologous arms, yielding a 5'-phosphate and a 3'-hydroxyl group; requires a central core of homology in the junction. The consensus cleavage sequence is 5'-(A/T)TT(C/G)-3'. Cleavage occurs on the 3'-side of the TT dinucleotide at the point of strand exchange. HJ branch migration catalyzed by RuvA-RuvB allows RuvC to scan DNA until it finds its consensus sequence, where it cleaves and resolves the cruciform DNA.</text>
</comment>
<comment type="catalytic activity">
    <reaction evidence="1">
        <text>Endonucleolytic cleavage at a junction such as a reciprocal single-stranded crossover between two homologous DNA duplexes (Holliday junction).</text>
        <dbReference type="EC" id="3.1.21.10"/>
    </reaction>
</comment>
<comment type="cofactor">
    <cofactor evidence="1">
        <name>Mg(2+)</name>
        <dbReference type="ChEBI" id="CHEBI:18420"/>
    </cofactor>
    <text evidence="1">Binds 2 Mg(2+) ion per subunit.</text>
</comment>
<comment type="subunit">
    <text evidence="1">Homodimer which binds Holliday junction (HJ) DNA. The HJ becomes 2-fold symmetrical on binding to RuvC with unstacked arms; it has a different conformation from HJ DNA in complex with RuvA. In the full resolvosome a probable DNA-RuvA(4)-RuvB(12)-RuvC(2) complex forms which resolves the HJ.</text>
</comment>
<comment type="subcellular location">
    <subcellularLocation>
        <location evidence="1">Cytoplasm</location>
    </subcellularLocation>
</comment>
<comment type="similarity">
    <text evidence="1">Belongs to the RuvC family.</text>
</comment>
<proteinExistence type="inferred from homology"/>
<gene>
    <name evidence="1" type="primary">ruvC</name>
    <name type="ordered locus">FTL_0930</name>
</gene>